<reference key="1">
    <citation type="journal article" date="2009" name="Nature">
        <title>Evolution of pathogenicity and sexual reproduction in eight Candida genomes.</title>
        <authorList>
            <person name="Butler G."/>
            <person name="Rasmussen M.D."/>
            <person name="Lin M.F."/>
            <person name="Santos M.A.S."/>
            <person name="Sakthikumar S."/>
            <person name="Munro C.A."/>
            <person name="Rheinbay E."/>
            <person name="Grabherr M."/>
            <person name="Forche A."/>
            <person name="Reedy J.L."/>
            <person name="Agrafioti I."/>
            <person name="Arnaud M.B."/>
            <person name="Bates S."/>
            <person name="Brown A.J.P."/>
            <person name="Brunke S."/>
            <person name="Costanzo M.C."/>
            <person name="Fitzpatrick D.A."/>
            <person name="de Groot P.W.J."/>
            <person name="Harris D."/>
            <person name="Hoyer L.L."/>
            <person name="Hube B."/>
            <person name="Klis F.M."/>
            <person name="Kodira C."/>
            <person name="Lennard N."/>
            <person name="Logue M.E."/>
            <person name="Martin R."/>
            <person name="Neiman A.M."/>
            <person name="Nikolaou E."/>
            <person name="Quail M.A."/>
            <person name="Quinn J."/>
            <person name="Santos M.C."/>
            <person name="Schmitzberger F.F."/>
            <person name="Sherlock G."/>
            <person name="Shah P."/>
            <person name="Silverstein K.A.T."/>
            <person name="Skrzypek M.S."/>
            <person name="Soll D."/>
            <person name="Staggs R."/>
            <person name="Stansfield I."/>
            <person name="Stumpf M.P.H."/>
            <person name="Sudbery P.E."/>
            <person name="Srikantha T."/>
            <person name="Zeng Q."/>
            <person name="Berman J."/>
            <person name="Berriman M."/>
            <person name="Heitman J."/>
            <person name="Gow N.A.R."/>
            <person name="Lorenz M.C."/>
            <person name="Birren B.W."/>
            <person name="Kellis M."/>
            <person name="Cuomo C.A."/>
        </authorList>
    </citation>
    <scope>NUCLEOTIDE SEQUENCE [LARGE SCALE GENOMIC DNA]</scope>
    <source>
        <strain>ATCC 6260 / CBS 566 / DSM 6381 / JCM 1539 / NBRC 10279 / NRRL Y-324</strain>
    </source>
</reference>
<accession>A5DQ88</accession>
<feature type="chain" id="PRO_0000392400" description="Fe-S cluster assembly protein DRE2">
    <location>
        <begin position="1"/>
        <end position="329"/>
    </location>
</feature>
<feature type="region of interest" description="N-terminal SAM-like domain" evidence="1">
    <location>
        <begin position="1"/>
        <end position="121"/>
    </location>
</feature>
<feature type="region of interest" description="Linker" evidence="1">
    <location>
        <begin position="122"/>
        <end position="199"/>
    </location>
</feature>
<feature type="region of interest" description="Disordered" evidence="2">
    <location>
        <begin position="141"/>
        <end position="162"/>
    </location>
</feature>
<feature type="region of interest" description="Fe-S binding site B" evidence="1">
    <location>
        <begin position="291"/>
        <end position="305"/>
    </location>
</feature>
<feature type="short sequence motif" description="Cx2C motif 1" evidence="1">
    <location>
        <begin position="291"/>
        <end position="294"/>
    </location>
</feature>
<feature type="short sequence motif" description="Cx2C motif 2" evidence="1">
    <location>
        <begin position="302"/>
        <end position="305"/>
    </location>
</feature>
<feature type="binding site" evidence="1">
    <location>
        <position position="291"/>
    </location>
    <ligand>
        <name>[4Fe-4S] cluster</name>
        <dbReference type="ChEBI" id="CHEBI:49883"/>
    </ligand>
</feature>
<feature type="binding site" evidence="1">
    <location>
        <position position="294"/>
    </location>
    <ligand>
        <name>[4Fe-4S] cluster</name>
        <dbReference type="ChEBI" id="CHEBI:49883"/>
    </ligand>
</feature>
<feature type="binding site" evidence="1">
    <location>
        <position position="302"/>
    </location>
    <ligand>
        <name>[4Fe-4S] cluster</name>
        <dbReference type="ChEBI" id="CHEBI:49883"/>
    </ligand>
</feature>
<feature type="binding site" evidence="1">
    <location>
        <position position="305"/>
    </location>
    <ligand>
        <name>[4Fe-4S] cluster</name>
        <dbReference type="ChEBI" id="CHEBI:49883"/>
    </ligand>
</feature>
<comment type="function">
    <text evidence="1">Component of the cytosolic iron-sulfur (Fe-S) protein assembly (CIA) machinery required for the maturation of extramitochondrial Fe-S proteins. Part of an electron transfer chain functioning in an early step of cytosolic Fe-S biogenesis, facilitating the de novo assembly of a [4Fe-4S] cluster on the scaffold complex CFD1-NBP35. Electrons are transferred to DRE2 from NADPH via the FAD- and FMN-containing protein TAH18. TAH18-DRE2 are also required for the assembly of the diferric tyrosyl radical cofactor of ribonucleotide reductase (RNR), probably by providing electrons for reduction during radical cofactor maturation in the catalytic small subunit RNR2.</text>
</comment>
<comment type="cofactor">
    <cofactor evidence="1">
        <name>[4Fe-4S] cluster</name>
        <dbReference type="ChEBI" id="CHEBI:49883"/>
    </cofactor>
</comment>
<comment type="subunit">
    <text evidence="1">Monomer. Interacts with TAH18. Interacts with MIA40.</text>
</comment>
<comment type="subcellular location">
    <subcellularLocation>
        <location evidence="1">Cytoplasm</location>
    </subcellularLocation>
    <subcellularLocation>
        <location evidence="1">Mitochondrion intermembrane space</location>
    </subcellularLocation>
</comment>
<comment type="domain">
    <text evidence="1">The C-terminal domain binds 2 Fe-S clusters but is otherwise mostly in an intrinsically disordered conformation.</text>
</comment>
<comment type="domain">
    <text evidence="1">The N-terminal domain has structural similarity with S-adenosyl-L-methionine-dependent methyltransferases, but does not bind S-adenosyl-L-methionine. It is required for correct assembly of the 2 Fe-S clusters.</text>
</comment>
<comment type="domain">
    <text evidence="1">The twin Cx2C motifs are involved in the recognition by the mitochondrial MIA40-ERV1 disulfide relay system. The formation of 2 disulfide bonds in the Cx2C motifs through dithiol/disulfide exchange reactions effectively traps the protein in the mitochondrial intermembrane space.</text>
</comment>
<comment type="similarity">
    <text evidence="1">Belongs to the anamorsin family.</text>
</comment>
<comment type="sequence caution" evidence="3">
    <conflict type="frameshift">
        <sequence resource="EMBL-CDS" id="EDK41341"/>
    </conflict>
</comment>
<sequence>MAVLLLLHPTVVTDPALAEASKKKWIQNDEEVTQHIIDRVANNIVEVPQNHYSKVVYINPNEAQHRGLPAQTIEQIFGFLKPEGKFCGDLPIDQNLDAIMSGFVVEDEHWLKPKPMASVAIPLRKKEKTDKNEPKKLPIFKKLNQDPGMTDTSASNTDEEETAIKRKLEESKLSYFSDDSDGEDDLVNEDELIDNSGLNYNLVVPKKCELPNGKRRRKSLLKIVLCGLKEVGGRAKDNRQRTLQDQILGSMAQLATKEAIEIEKRLAKSVKFTEDELTEVDFTVQGKTGGCNSCALGDAFRCDGCPYLGLPPFKPGEAITIDGIDEDWS</sequence>
<protein>
    <recommendedName>
        <fullName evidence="1">Fe-S cluster assembly protein DRE2</fullName>
    </recommendedName>
    <alternativeName>
        <fullName evidence="1">Anamorsin homolog</fullName>
    </alternativeName>
</protein>
<organism>
    <name type="scientific">Meyerozyma guilliermondii (strain ATCC 6260 / CBS 566 / DSM 6381 / JCM 1539 / NBRC 10279 / NRRL Y-324)</name>
    <name type="common">Yeast</name>
    <name type="synonym">Candida guilliermondii</name>
    <dbReference type="NCBI Taxonomy" id="294746"/>
    <lineage>
        <taxon>Eukaryota</taxon>
        <taxon>Fungi</taxon>
        <taxon>Dikarya</taxon>
        <taxon>Ascomycota</taxon>
        <taxon>Saccharomycotina</taxon>
        <taxon>Pichiomycetes</taxon>
        <taxon>Debaryomycetaceae</taxon>
        <taxon>Meyerozyma</taxon>
    </lineage>
</organism>
<proteinExistence type="inferred from homology"/>
<keyword id="KW-0004">4Fe-4S</keyword>
<keyword id="KW-0963">Cytoplasm</keyword>
<keyword id="KW-0408">Iron</keyword>
<keyword id="KW-0411">Iron-sulfur</keyword>
<keyword id="KW-0479">Metal-binding</keyword>
<keyword id="KW-0496">Mitochondrion</keyword>
<keyword id="KW-1185">Reference proteome</keyword>
<evidence type="ECO:0000255" key="1">
    <source>
        <dbReference type="HAMAP-Rule" id="MF_03115"/>
    </source>
</evidence>
<evidence type="ECO:0000256" key="2">
    <source>
        <dbReference type="SAM" id="MobiDB-lite"/>
    </source>
</evidence>
<evidence type="ECO:0000305" key="3"/>
<gene>
    <name evidence="1" type="primary">DRE2</name>
    <name type="ORF">PGUG_05439</name>
</gene>
<name>DRE2_PICGU</name>
<dbReference type="EMBL" id="CH408161">
    <property type="protein sequence ID" value="EDK41341.1"/>
    <property type="status" value="ALT_FRAME"/>
    <property type="molecule type" value="Genomic_DNA"/>
</dbReference>
<dbReference type="RefSeq" id="XP_001482419.1">
    <property type="nucleotide sequence ID" value="XM_001482369.1"/>
</dbReference>
<dbReference type="SMR" id="A5DQ88"/>
<dbReference type="FunCoup" id="A5DQ88">
    <property type="interactions" value="172"/>
</dbReference>
<dbReference type="STRING" id="294746.A5DQ88"/>
<dbReference type="GeneID" id="5124006"/>
<dbReference type="KEGG" id="pgu:PGUG_05439"/>
<dbReference type="eggNOG" id="KOG4020">
    <property type="taxonomic scope" value="Eukaryota"/>
</dbReference>
<dbReference type="HOGENOM" id="CLU_067152_0_1_1"/>
<dbReference type="InParanoid" id="A5DQ88"/>
<dbReference type="OrthoDB" id="311633at2759"/>
<dbReference type="Proteomes" id="UP000001997">
    <property type="component" value="Unassembled WGS sequence"/>
</dbReference>
<dbReference type="GO" id="GO:0005758">
    <property type="term" value="C:mitochondrial intermembrane space"/>
    <property type="evidence" value="ECO:0007669"/>
    <property type="project" value="UniProtKB-SubCell"/>
</dbReference>
<dbReference type="GO" id="GO:0051537">
    <property type="term" value="F:2 iron, 2 sulfur cluster binding"/>
    <property type="evidence" value="ECO:0007669"/>
    <property type="project" value="UniProtKB-UniRule"/>
</dbReference>
<dbReference type="GO" id="GO:0051539">
    <property type="term" value="F:4 iron, 4 sulfur cluster binding"/>
    <property type="evidence" value="ECO:0007669"/>
    <property type="project" value="UniProtKB-KW"/>
</dbReference>
<dbReference type="GO" id="GO:0009055">
    <property type="term" value="F:electron transfer activity"/>
    <property type="evidence" value="ECO:0007669"/>
    <property type="project" value="UniProtKB-UniRule"/>
</dbReference>
<dbReference type="GO" id="GO:0046872">
    <property type="term" value="F:metal ion binding"/>
    <property type="evidence" value="ECO:0007669"/>
    <property type="project" value="UniProtKB-KW"/>
</dbReference>
<dbReference type="GO" id="GO:0016226">
    <property type="term" value="P:iron-sulfur cluster assembly"/>
    <property type="evidence" value="ECO:0007669"/>
    <property type="project" value="UniProtKB-UniRule"/>
</dbReference>
<dbReference type="Gene3D" id="3.40.50.11000">
    <property type="entry name" value="Fe-S cluster assembly protein Dre2, N-terminal domain"/>
    <property type="match status" value="1"/>
</dbReference>
<dbReference type="HAMAP" id="MF_03115">
    <property type="entry name" value="Anamorsin"/>
    <property type="match status" value="1"/>
</dbReference>
<dbReference type="InterPro" id="IPR007785">
    <property type="entry name" value="Anamorsin"/>
</dbReference>
<dbReference type="InterPro" id="IPR046408">
    <property type="entry name" value="CIAPIN1"/>
</dbReference>
<dbReference type="InterPro" id="IPR031838">
    <property type="entry name" value="Dre2_N"/>
</dbReference>
<dbReference type="PANTHER" id="PTHR13273">
    <property type="entry name" value="ANAMORSIN"/>
    <property type="match status" value="1"/>
</dbReference>
<dbReference type="PANTHER" id="PTHR13273:SF14">
    <property type="entry name" value="ANAMORSIN"/>
    <property type="match status" value="1"/>
</dbReference>
<dbReference type="Pfam" id="PF05093">
    <property type="entry name" value="CIAPIN1"/>
    <property type="match status" value="1"/>
</dbReference>
<dbReference type="Pfam" id="PF16803">
    <property type="entry name" value="DRE2_N"/>
    <property type="match status" value="1"/>
</dbReference>